<protein>
    <recommendedName>
        <fullName evidence="1">Galactokinase</fullName>
        <ecNumber evidence="1">2.7.1.6</ecNumber>
    </recommendedName>
    <alternativeName>
        <fullName evidence="1">Galactose kinase</fullName>
    </alternativeName>
</protein>
<reference key="1">
    <citation type="journal article" date="2008" name="J. Bacteriol.">
        <title>The complete genome sequence of Actinobacillus pleuropneumoniae L20 (serotype 5b).</title>
        <authorList>
            <person name="Foote S.J."/>
            <person name="Bosse J.T."/>
            <person name="Bouevitch A.B."/>
            <person name="Langford P.R."/>
            <person name="Young N.M."/>
            <person name="Nash J.H.E."/>
        </authorList>
    </citation>
    <scope>NUCLEOTIDE SEQUENCE [LARGE SCALE GENOMIC DNA]</scope>
    <source>
        <strain>L20</strain>
    </source>
</reference>
<comment type="function">
    <text evidence="1">Catalyzes the transfer of the gamma-phosphate of ATP to D-galactose to form alpha-D-galactose-1-phosphate (Gal-1-P).</text>
</comment>
<comment type="catalytic activity">
    <reaction evidence="1">
        <text>alpha-D-galactose + ATP = alpha-D-galactose 1-phosphate + ADP + H(+)</text>
        <dbReference type="Rhea" id="RHEA:13553"/>
        <dbReference type="ChEBI" id="CHEBI:15378"/>
        <dbReference type="ChEBI" id="CHEBI:28061"/>
        <dbReference type="ChEBI" id="CHEBI:30616"/>
        <dbReference type="ChEBI" id="CHEBI:58336"/>
        <dbReference type="ChEBI" id="CHEBI:456216"/>
        <dbReference type="EC" id="2.7.1.6"/>
    </reaction>
</comment>
<comment type="pathway">
    <text evidence="1">Carbohydrate metabolism; galactose metabolism.</text>
</comment>
<comment type="subcellular location">
    <subcellularLocation>
        <location evidence="1">Cytoplasm</location>
    </subcellularLocation>
</comment>
<comment type="similarity">
    <text evidence="1">Belongs to the GHMP kinase family. GalK subfamily.</text>
</comment>
<dbReference type="EC" id="2.7.1.6" evidence="1"/>
<dbReference type="EMBL" id="CP000569">
    <property type="protein sequence ID" value="ABN74089.1"/>
    <property type="molecule type" value="Genomic_DNA"/>
</dbReference>
<dbReference type="RefSeq" id="WP_009874838.1">
    <property type="nucleotide sequence ID" value="NC_009053.1"/>
</dbReference>
<dbReference type="SMR" id="A3N103"/>
<dbReference type="STRING" id="416269.APL_0995"/>
<dbReference type="EnsemblBacteria" id="ABN74089">
    <property type="protein sequence ID" value="ABN74089"/>
    <property type="gene ID" value="APL_0995"/>
</dbReference>
<dbReference type="KEGG" id="apl:APL_0995"/>
<dbReference type="PATRIC" id="fig|416269.6.peg.1043"/>
<dbReference type="eggNOG" id="COG0153">
    <property type="taxonomic scope" value="Bacteria"/>
</dbReference>
<dbReference type="HOGENOM" id="CLU_017814_2_1_6"/>
<dbReference type="UniPathway" id="UPA00214"/>
<dbReference type="Proteomes" id="UP000001432">
    <property type="component" value="Chromosome"/>
</dbReference>
<dbReference type="GO" id="GO:0005829">
    <property type="term" value="C:cytosol"/>
    <property type="evidence" value="ECO:0007669"/>
    <property type="project" value="TreeGrafter"/>
</dbReference>
<dbReference type="GO" id="GO:0005524">
    <property type="term" value="F:ATP binding"/>
    <property type="evidence" value="ECO:0007669"/>
    <property type="project" value="UniProtKB-UniRule"/>
</dbReference>
<dbReference type="GO" id="GO:0004335">
    <property type="term" value="F:galactokinase activity"/>
    <property type="evidence" value="ECO:0007669"/>
    <property type="project" value="UniProtKB-UniRule"/>
</dbReference>
<dbReference type="GO" id="GO:0000287">
    <property type="term" value="F:magnesium ion binding"/>
    <property type="evidence" value="ECO:0007669"/>
    <property type="project" value="UniProtKB-UniRule"/>
</dbReference>
<dbReference type="GO" id="GO:0006012">
    <property type="term" value="P:galactose metabolic process"/>
    <property type="evidence" value="ECO:0007669"/>
    <property type="project" value="UniProtKB-UniRule"/>
</dbReference>
<dbReference type="FunFam" id="3.30.230.10:FF:000017">
    <property type="entry name" value="Galactokinase"/>
    <property type="match status" value="1"/>
</dbReference>
<dbReference type="FunFam" id="3.30.70.890:FF:000001">
    <property type="entry name" value="Galactokinase"/>
    <property type="match status" value="1"/>
</dbReference>
<dbReference type="Gene3D" id="3.30.230.10">
    <property type="match status" value="1"/>
</dbReference>
<dbReference type="Gene3D" id="3.30.70.890">
    <property type="entry name" value="GHMP kinase, C-terminal domain"/>
    <property type="match status" value="1"/>
</dbReference>
<dbReference type="HAMAP" id="MF_00246">
    <property type="entry name" value="Galactokinase"/>
    <property type="match status" value="1"/>
</dbReference>
<dbReference type="InterPro" id="IPR000705">
    <property type="entry name" value="Galactokinase"/>
</dbReference>
<dbReference type="InterPro" id="IPR022963">
    <property type="entry name" value="Galactokinase_bac"/>
</dbReference>
<dbReference type="InterPro" id="IPR019741">
    <property type="entry name" value="Galactokinase_CS"/>
</dbReference>
<dbReference type="InterPro" id="IPR019539">
    <property type="entry name" value="GalKase_N"/>
</dbReference>
<dbReference type="InterPro" id="IPR013750">
    <property type="entry name" value="GHMP_kinase_C_dom"/>
</dbReference>
<dbReference type="InterPro" id="IPR036554">
    <property type="entry name" value="GHMP_kinase_C_sf"/>
</dbReference>
<dbReference type="InterPro" id="IPR006204">
    <property type="entry name" value="GHMP_kinase_N_dom"/>
</dbReference>
<dbReference type="InterPro" id="IPR006203">
    <property type="entry name" value="GHMP_knse_ATP-bd_CS"/>
</dbReference>
<dbReference type="InterPro" id="IPR006206">
    <property type="entry name" value="Mevalonate/galactokinase"/>
</dbReference>
<dbReference type="InterPro" id="IPR020568">
    <property type="entry name" value="Ribosomal_Su5_D2-typ_SF"/>
</dbReference>
<dbReference type="InterPro" id="IPR014721">
    <property type="entry name" value="Ribsml_uS5_D2-typ_fold_subgr"/>
</dbReference>
<dbReference type="NCBIfam" id="TIGR00131">
    <property type="entry name" value="gal_kin"/>
    <property type="match status" value="1"/>
</dbReference>
<dbReference type="NCBIfam" id="NF003472">
    <property type="entry name" value="PRK05101.1"/>
    <property type="match status" value="1"/>
</dbReference>
<dbReference type="PANTHER" id="PTHR10457:SF7">
    <property type="entry name" value="GALACTOKINASE-RELATED"/>
    <property type="match status" value="1"/>
</dbReference>
<dbReference type="PANTHER" id="PTHR10457">
    <property type="entry name" value="MEVALONATE KINASE/GALACTOKINASE"/>
    <property type="match status" value="1"/>
</dbReference>
<dbReference type="Pfam" id="PF10509">
    <property type="entry name" value="GalKase_gal_bdg"/>
    <property type="match status" value="1"/>
</dbReference>
<dbReference type="Pfam" id="PF08544">
    <property type="entry name" value="GHMP_kinases_C"/>
    <property type="match status" value="1"/>
</dbReference>
<dbReference type="Pfam" id="PF00288">
    <property type="entry name" value="GHMP_kinases_N"/>
    <property type="match status" value="1"/>
</dbReference>
<dbReference type="PIRSF" id="PIRSF000530">
    <property type="entry name" value="Galactokinase"/>
    <property type="match status" value="1"/>
</dbReference>
<dbReference type="PRINTS" id="PR00473">
    <property type="entry name" value="GALCTOKINASE"/>
</dbReference>
<dbReference type="PRINTS" id="PR00959">
    <property type="entry name" value="MEVGALKINASE"/>
</dbReference>
<dbReference type="SUPFAM" id="SSF55060">
    <property type="entry name" value="GHMP Kinase, C-terminal domain"/>
    <property type="match status" value="1"/>
</dbReference>
<dbReference type="SUPFAM" id="SSF54211">
    <property type="entry name" value="Ribosomal protein S5 domain 2-like"/>
    <property type="match status" value="1"/>
</dbReference>
<dbReference type="PROSITE" id="PS00106">
    <property type="entry name" value="GALACTOKINASE"/>
    <property type="match status" value="1"/>
</dbReference>
<dbReference type="PROSITE" id="PS00627">
    <property type="entry name" value="GHMP_KINASES_ATP"/>
    <property type="match status" value="1"/>
</dbReference>
<keyword id="KW-0067">ATP-binding</keyword>
<keyword id="KW-0119">Carbohydrate metabolism</keyword>
<keyword id="KW-0963">Cytoplasm</keyword>
<keyword id="KW-0299">Galactose metabolism</keyword>
<keyword id="KW-0418">Kinase</keyword>
<keyword id="KW-0460">Magnesium</keyword>
<keyword id="KW-0479">Metal-binding</keyword>
<keyword id="KW-0547">Nucleotide-binding</keyword>
<keyword id="KW-1185">Reference proteome</keyword>
<keyword id="KW-0808">Transferase</keyword>
<gene>
    <name evidence="1" type="primary">galK</name>
    <name type="ordered locus">APL_0995</name>
</gene>
<evidence type="ECO:0000255" key="1">
    <source>
        <dbReference type="HAMAP-Rule" id="MF_00246"/>
    </source>
</evidence>
<organism>
    <name type="scientific">Actinobacillus pleuropneumoniae serotype 5b (strain L20)</name>
    <dbReference type="NCBI Taxonomy" id="416269"/>
    <lineage>
        <taxon>Bacteria</taxon>
        <taxon>Pseudomonadati</taxon>
        <taxon>Pseudomonadota</taxon>
        <taxon>Gammaproteobacteria</taxon>
        <taxon>Pasteurellales</taxon>
        <taxon>Pasteurellaceae</taxon>
        <taxon>Actinobacillus</taxon>
    </lineage>
</organism>
<name>GAL1_ACTP2</name>
<accession>A3N103</accession>
<sequence length="384" mass="42298">MKPQQLATQKFSEHYGYSAAQTVFAPGRVNIIGEHTDYNDGFVMPCAINYGMAVSFSKRDDSVWRVYAIDIDEQDEFDLSRPIEPSEHKWANYVRGVVKYIQEKCPEFKQGADLAMTSDVPMSSGLSSSAALEISIGKTAQVLGDLPLGLAEIALIGQQAENKFVGANCGNMDQLTSALGQKDQVIMIDCRSLEITPTPVPHGYSIAIINSNVKHDLVTGEYNSRRQECEFAARFFGVKALRDVTPEQFIERAAELQAENELAYKRAKHIISENQRVLEAVEALKANDMVKLGQLMAGSHDSMRDDFEITIPEIDYLVELAQIAIGKNGGARMTGGGFGGCIVCLVPDGKVEHLRRIIADNYEKQTGIKETFHLCTACDGVHLI</sequence>
<feature type="chain" id="PRO_1000005743" description="Galactokinase">
    <location>
        <begin position="1"/>
        <end position="384"/>
    </location>
</feature>
<feature type="active site" description="Proton acceptor" evidence="1">
    <location>
        <position position="173"/>
    </location>
</feature>
<feature type="binding site" evidence="1">
    <location>
        <begin position="34"/>
        <end position="37"/>
    </location>
    <ligand>
        <name>substrate</name>
    </ligand>
</feature>
<feature type="binding site" evidence="1">
    <location>
        <begin position="123"/>
        <end position="129"/>
    </location>
    <ligand>
        <name>ATP</name>
        <dbReference type="ChEBI" id="CHEBI:30616"/>
    </ligand>
</feature>
<feature type="binding site" evidence="1">
    <location>
        <position position="129"/>
    </location>
    <ligand>
        <name>Mg(2+)</name>
        <dbReference type="ChEBI" id="CHEBI:18420"/>
    </ligand>
</feature>
<feature type="binding site" evidence="1">
    <location>
        <position position="161"/>
    </location>
    <ligand>
        <name>Mg(2+)</name>
        <dbReference type="ChEBI" id="CHEBI:18420"/>
    </ligand>
</feature>
<feature type="binding site" evidence="1">
    <location>
        <position position="222"/>
    </location>
    <ligand>
        <name>substrate</name>
    </ligand>
</feature>
<feature type="site" description="Transition state stabilizer" evidence="1">
    <location>
        <position position="28"/>
    </location>
</feature>
<proteinExistence type="inferred from homology"/>